<gene>
    <name evidence="1" type="primary">rsmA</name>
    <name evidence="1" type="synonym">ksgA</name>
    <name type="ordered locus">RER_43600</name>
</gene>
<reference key="1">
    <citation type="submission" date="2005-03" db="EMBL/GenBank/DDBJ databases">
        <title>Comparison of the complete genome sequences of Rhodococcus erythropolis PR4 and Rhodococcus opacus B4.</title>
        <authorList>
            <person name="Takarada H."/>
            <person name="Sekine M."/>
            <person name="Hosoyama A."/>
            <person name="Yamada R."/>
            <person name="Fujisawa T."/>
            <person name="Omata S."/>
            <person name="Shimizu A."/>
            <person name="Tsukatani N."/>
            <person name="Tanikawa S."/>
            <person name="Fujita N."/>
            <person name="Harayama S."/>
        </authorList>
    </citation>
    <scope>NUCLEOTIDE SEQUENCE [LARGE SCALE GENOMIC DNA]</scope>
    <source>
        <strain>PR4 / NBRC 100887</strain>
    </source>
</reference>
<protein>
    <recommendedName>
        <fullName evidence="1">Ribosomal RNA small subunit methyltransferase A</fullName>
        <ecNumber evidence="1">2.1.1.182</ecNumber>
    </recommendedName>
    <alternativeName>
        <fullName evidence="1">16S rRNA (adenine(1518)-N(6)/adenine(1519)-N(6))-dimethyltransferase</fullName>
    </alternativeName>
    <alternativeName>
        <fullName evidence="1">16S rRNA dimethyladenosine transferase</fullName>
    </alternativeName>
    <alternativeName>
        <fullName evidence="1">16S rRNA dimethylase</fullName>
    </alternativeName>
    <alternativeName>
        <fullName evidence="1">S-adenosylmethionine-6-N', N'-adenosyl(rRNA) dimethyltransferase</fullName>
    </alternativeName>
</protein>
<proteinExistence type="inferred from homology"/>
<dbReference type="EC" id="2.1.1.182" evidence="1"/>
<dbReference type="EMBL" id="AP008957">
    <property type="protein sequence ID" value="BAH35068.1"/>
    <property type="molecule type" value="Genomic_DNA"/>
</dbReference>
<dbReference type="RefSeq" id="WP_003946263.1">
    <property type="nucleotide sequence ID" value="NC_012490.1"/>
</dbReference>
<dbReference type="SMR" id="C1A383"/>
<dbReference type="GeneID" id="93801430"/>
<dbReference type="KEGG" id="rer:RER_43600"/>
<dbReference type="eggNOG" id="COG0030">
    <property type="taxonomic scope" value="Bacteria"/>
</dbReference>
<dbReference type="HOGENOM" id="CLU_041220_1_1_11"/>
<dbReference type="Proteomes" id="UP000002204">
    <property type="component" value="Chromosome"/>
</dbReference>
<dbReference type="GO" id="GO:0005829">
    <property type="term" value="C:cytosol"/>
    <property type="evidence" value="ECO:0007669"/>
    <property type="project" value="TreeGrafter"/>
</dbReference>
<dbReference type="GO" id="GO:0052908">
    <property type="term" value="F:16S rRNA (adenine(1518)-N(6)/adenine(1519)-N(6))-dimethyltransferase activity"/>
    <property type="evidence" value="ECO:0007669"/>
    <property type="project" value="UniProtKB-EC"/>
</dbReference>
<dbReference type="GO" id="GO:0003723">
    <property type="term" value="F:RNA binding"/>
    <property type="evidence" value="ECO:0007669"/>
    <property type="project" value="UniProtKB-KW"/>
</dbReference>
<dbReference type="CDD" id="cd02440">
    <property type="entry name" value="AdoMet_MTases"/>
    <property type="match status" value="1"/>
</dbReference>
<dbReference type="FunFam" id="1.10.8.100:FF:000003">
    <property type="entry name" value="Ribosomal RNA small subunit methyltransferase A"/>
    <property type="match status" value="1"/>
</dbReference>
<dbReference type="FunFam" id="3.40.50.150:FF:000023">
    <property type="entry name" value="Ribosomal RNA small subunit methyltransferase A"/>
    <property type="match status" value="1"/>
</dbReference>
<dbReference type="Gene3D" id="1.10.8.100">
    <property type="entry name" value="Ribosomal RNA adenine dimethylase-like, domain 2"/>
    <property type="match status" value="1"/>
</dbReference>
<dbReference type="Gene3D" id="3.40.50.150">
    <property type="entry name" value="Vaccinia Virus protein VP39"/>
    <property type="match status" value="1"/>
</dbReference>
<dbReference type="HAMAP" id="MF_00607">
    <property type="entry name" value="16SrRNA_methyltr_A"/>
    <property type="match status" value="1"/>
</dbReference>
<dbReference type="InterPro" id="IPR001737">
    <property type="entry name" value="KsgA/Erm"/>
</dbReference>
<dbReference type="InterPro" id="IPR023165">
    <property type="entry name" value="rRNA_Ade_diMease-like_C"/>
</dbReference>
<dbReference type="InterPro" id="IPR020596">
    <property type="entry name" value="rRNA_Ade_Mease_Trfase_CS"/>
</dbReference>
<dbReference type="InterPro" id="IPR020598">
    <property type="entry name" value="rRNA_Ade_methylase_Trfase_N"/>
</dbReference>
<dbReference type="InterPro" id="IPR011530">
    <property type="entry name" value="rRNA_adenine_dimethylase"/>
</dbReference>
<dbReference type="InterPro" id="IPR029063">
    <property type="entry name" value="SAM-dependent_MTases_sf"/>
</dbReference>
<dbReference type="NCBIfam" id="TIGR00755">
    <property type="entry name" value="ksgA"/>
    <property type="match status" value="1"/>
</dbReference>
<dbReference type="PANTHER" id="PTHR11727">
    <property type="entry name" value="DIMETHYLADENOSINE TRANSFERASE"/>
    <property type="match status" value="1"/>
</dbReference>
<dbReference type="PANTHER" id="PTHR11727:SF7">
    <property type="entry name" value="DIMETHYLADENOSINE TRANSFERASE-RELATED"/>
    <property type="match status" value="1"/>
</dbReference>
<dbReference type="Pfam" id="PF00398">
    <property type="entry name" value="RrnaAD"/>
    <property type="match status" value="1"/>
</dbReference>
<dbReference type="SMART" id="SM00650">
    <property type="entry name" value="rADc"/>
    <property type="match status" value="1"/>
</dbReference>
<dbReference type="SUPFAM" id="SSF53335">
    <property type="entry name" value="S-adenosyl-L-methionine-dependent methyltransferases"/>
    <property type="match status" value="1"/>
</dbReference>
<dbReference type="PROSITE" id="PS01131">
    <property type="entry name" value="RRNA_A_DIMETH"/>
    <property type="match status" value="1"/>
</dbReference>
<dbReference type="PROSITE" id="PS51689">
    <property type="entry name" value="SAM_RNA_A_N6_MT"/>
    <property type="match status" value="1"/>
</dbReference>
<organism>
    <name type="scientific">Rhodococcus erythropolis (strain PR4 / NBRC 100887)</name>
    <dbReference type="NCBI Taxonomy" id="234621"/>
    <lineage>
        <taxon>Bacteria</taxon>
        <taxon>Bacillati</taxon>
        <taxon>Actinomycetota</taxon>
        <taxon>Actinomycetes</taxon>
        <taxon>Mycobacteriales</taxon>
        <taxon>Nocardiaceae</taxon>
        <taxon>Rhodococcus</taxon>
        <taxon>Rhodococcus erythropolis group</taxon>
    </lineage>
</organism>
<comment type="function">
    <text evidence="1">Specifically dimethylates two adjacent adenosines (A1518 and A1519) in the loop of a conserved hairpin near the 3'-end of 16S rRNA in the 30S particle. May play a critical role in biogenesis of 30S subunits.</text>
</comment>
<comment type="catalytic activity">
    <reaction evidence="1">
        <text>adenosine(1518)/adenosine(1519) in 16S rRNA + 4 S-adenosyl-L-methionine = N(6)-dimethyladenosine(1518)/N(6)-dimethyladenosine(1519) in 16S rRNA + 4 S-adenosyl-L-homocysteine + 4 H(+)</text>
        <dbReference type="Rhea" id="RHEA:19609"/>
        <dbReference type="Rhea" id="RHEA-COMP:10232"/>
        <dbReference type="Rhea" id="RHEA-COMP:10233"/>
        <dbReference type="ChEBI" id="CHEBI:15378"/>
        <dbReference type="ChEBI" id="CHEBI:57856"/>
        <dbReference type="ChEBI" id="CHEBI:59789"/>
        <dbReference type="ChEBI" id="CHEBI:74411"/>
        <dbReference type="ChEBI" id="CHEBI:74493"/>
        <dbReference type="EC" id="2.1.1.182"/>
    </reaction>
</comment>
<comment type="subcellular location">
    <subcellularLocation>
        <location evidence="1">Cytoplasm</location>
    </subcellularLocation>
</comment>
<comment type="similarity">
    <text evidence="1">Belongs to the class I-like SAM-binding methyltransferase superfamily. rRNA adenine N(6)-methyltransferase family. RsmA subfamily.</text>
</comment>
<keyword id="KW-0963">Cytoplasm</keyword>
<keyword id="KW-0489">Methyltransferase</keyword>
<keyword id="KW-0694">RNA-binding</keyword>
<keyword id="KW-0698">rRNA processing</keyword>
<keyword id="KW-0949">S-adenosyl-L-methionine</keyword>
<keyword id="KW-0808">Transferase</keyword>
<feature type="chain" id="PRO_1000212251" description="Ribosomal RNA small subunit methyltransferase A">
    <location>
        <begin position="1"/>
        <end position="299"/>
    </location>
</feature>
<feature type="binding site" evidence="1">
    <location>
        <position position="44"/>
    </location>
    <ligand>
        <name>S-adenosyl-L-methionine</name>
        <dbReference type="ChEBI" id="CHEBI:59789"/>
    </ligand>
</feature>
<feature type="binding site" evidence="1">
    <location>
        <position position="46"/>
    </location>
    <ligand>
        <name>S-adenosyl-L-methionine</name>
        <dbReference type="ChEBI" id="CHEBI:59789"/>
    </ligand>
</feature>
<feature type="binding site" evidence="1">
    <location>
        <position position="71"/>
    </location>
    <ligand>
        <name>S-adenosyl-L-methionine</name>
        <dbReference type="ChEBI" id="CHEBI:59789"/>
    </ligand>
</feature>
<feature type="binding site" evidence="1">
    <location>
        <position position="92"/>
    </location>
    <ligand>
        <name>S-adenosyl-L-methionine</name>
        <dbReference type="ChEBI" id="CHEBI:59789"/>
    </ligand>
</feature>
<feature type="binding site" evidence="1">
    <location>
        <position position="122"/>
    </location>
    <ligand>
        <name>S-adenosyl-L-methionine</name>
        <dbReference type="ChEBI" id="CHEBI:59789"/>
    </ligand>
</feature>
<feature type="binding site" evidence="1">
    <location>
        <position position="141"/>
    </location>
    <ligand>
        <name>S-adenosyl-L-methionine</name>
        <dbReference type="ChEBI" id="CHEBI:59789"/>
    </ligand>
</feature>
<sequence>MSDAEQSNEPIATPRGQAALLGPVEVRALAEEFGVRPTKQLGQNFVHDANTVRRIVTTAGVTRDDVVLEVGPGLGSLTMALMDVVDRVIAVEIDPNLAARLPKTVAERAPELADRLTVVEADAMRVLPSQIPGEPTALVANLPYNVAVPVLLHLFASLPSLRTALVMVQAEVADRLAADPGSKIYGVPSVKANFFGEVRRAGAVGRNVFWPVPKVESGLVRIDRYAEPPWPMDEKHRKQVFAAIDAAFAQRRKTLRAALSGWAGSPAEAERRLLAAGIEPQTRGEMLDAAAFVRLAGGE</sequence>
<name>RSMA_RHOE4</name>
<evidence type="ECO:0000255" key="1">
    <source>
        <dbReference type="HAMAP-Rule" id="MF_00607"/>
    </source>
</evidence>
<accession>C1A383</accession>